<accession>Q8L7L5</accession>
<accession>Q9M2D3</accession>
<feature type="chain" id="PRO_0000432029" description="AT-hook motif nuclear-localized protein 11">
    <location>
        <begin position="1"/>
        <end position="354"/>
    </location>
</feature>
<feature type="domain" description="PPC" evidence="3">
    <location>
        <begin position="159"/>
        <end position="302"/>
    </location>
</feature>
<feature type="DNA-binding region" description="A.T hook 1" evidence="2">
    <location>
        <begin position="101"/>
        <end position="113"/>
    </location>
</feature>
<feature type="DNA-binding region" description="A.T hook 2" evidence="2">
    <location>
        <begin position="134"/>
        <end position="146"/>
    </location>
</feature>
<feature type="region of interest" description="Disordered" evidence="4">
    <location>
        <begin position="1"/>
        <end position="158"/>
    </location>
</feature>
<feature type="region of interest" description="Disordered" evidence="4">
    <location>
        <begin position="290"/>
        <end position="354"/>
    </location>
</feature>
<feature type="short sequence motif" description="Bipartite nuclear localization signal" evidence="7">
    <location>
        <begin position="101"/>
        <end position="109"/>
    </location>
</feature>
<feature type="compositionally biased region" description="Low complexity" evidence="4">
    <location>
        <begin position="46"/>
        <end position="55"/>
    </location>
</feature>
<feature type="compositionally biased region" description="Low complexity" evidence="4">
    <location>
        <begin position="75"/>
        <end position="96"/>
    </location>
</feature>
<feature type="compositionally biased region" description="Low complexity" evidence="4">
    <location>
        <begin position="122"/>
        <end position="133"/>
    </location>
</feature>
<feature type="compositionally biased region" description="Acidic residues" evidence="4">
    <location>
        <begin position="294"/>
        <end position="303"/>
    </location>
</feature>
<feature type="compositionally biased region" description="Polar residues" evidence="4">
    <location>
        <begin position="304"/>
        <end position="327"/>
    </location>
</feature>
<feature type="compositionally biased region" description="Basic and acidic residues" evidence="4">
    <location>
        <begin position="340"/>
        <end position="354"/>
    </location>
</feature>
<sequence>MDRRDAMALSGSGSYYIQRGIPGSGPPPPQTQPTFHGSQGFHHFTNSISPFGSNPNPNPNPGGVSTGFVSPPLPVDSSPADSSAAAAGALVAPPSGDTSVKRKRGRPRKYGQDGGSVSLALSPSISNVSPNSNKRGRGRPPGSGKKQRLSSIGEMMPSSTGMSFTPHVIVVSIGEDIASKVISFSHQGPRAICVLSASGAVSTATLLQPAPSHGTIIYEGLFELISLSTSYLNTTDNDYPNRTGSLAVSLASPDGRVIGGGIGGPLIAASQVQVIVGSFIWAIPKGKIKKREETSEDVQDTDALENNNDNTAATSPPVPQQSQNIVQTPVGIWSTGSRSMDMHHPHMDIDLMRG</sequence>
<organism>
    <name type="scientific">Arabidopsis thaliana</name>
    <name type="common">Mouse-ear cress</name>
    <dbReference type="NCBI Taxonomy" id="3702"/>
    <lineage>
        <taxon>Eukaryota</taxon>
        <taxon>Viridiplantae</taxon>
        <taxon>Streptophyta</taxon>
        <taxon>Embryophyta</taxon>
        <taxon>Tracheophyta</taxon>
        <taxon>Spermatophyta</taxon>
        <taxon>Magnoliopsida</taxon>
        <taxon>eudicotyledons</taxon>
        <taxon>Gunneridae</taxon>
        <taxon>Pentapetalae</taxon>
        <taxon>rosids</taxon>
        <taxon>malvids</taxon>
        <taxon>Brassicales</taxon>
        <taxon>Brassicaceae</taxon>
        <taxon>Camelineae</taxon>
        <taxon>Arabidopsis</taxon>
    </lineage>
</organism>
<name>AHL11_ARATH</name>
<reference key="1">
    <citation type="journal article" date="2000" name="Nature">
        <title>Sequence and analysis of chromosome 3 of the plant Arabidopsis thaliana.</title>
        <authorList>
            <person name="Salanoubat M."/>
            <person name="Lemcke K."/>
            <person name="Rieger M."/>
            <person name="Ansorge W."/>
            <person name="Unseld M."/>
            <person name="Fartmann B."/>
            <person name="Valle G."/>
            <person name="Bloecker H."/>
            <person name="Perez-Alonso M."/>
            <person name="Obermaier B."/>
            <person name="Delseny M."/>
            <person name="Boutry M."/>
            <person name="Grivell L.A."/>
            <person name="Mache R."/>
            <person name="Puigdomenech P."/>
            <person name="De Simone V."/>
            <person name="Choisne N."/>
            <person name="Artiguenave F."/>
            <person name="Robert C."/>
            <person name="Brottier P."/>
            <person name="Wincker P."/>
            <person name="Cattolico L."/>
            <person name="Weissenbach J."/>
            <person name="Saurin W."/>
            <person name="Quetier F."/>
            <person name="Schaefer M."/>
            <person name="Mueller-Auer S."/>
            <person name="Gabel C."/>
            <person name="Fuchs M."/>
            <person name="Benes V."/>
            <person name="Wurmbach E."/>
            <person name="Drzonek H."/>
            <person name="Erfle H."/>
            <person name="Jordan N."/>
            <person name="Bangert S."/>
            <person name="Wiedelmann R."/>
            <person name="Kranz H."/>
            <person name="Voss H."/>
            <person name="Holland R."/>
            <person name="Brandt P."/>
            <person name="Nyakatura G."/>
            <person name="Vezzi A."/>
            <person name="D'Angelo M."/>
            <person name="Pallavicini A."/>
            <person name="Toppo S."/>
            <person name="Simionati B."/>
            <person name="Conrad A."/>
            <person name="Hornischer K."/>
            <person name="Kauer G."/>
            <person name="Loehnert T.-H."/>
            <person name="Nordsiek G."/>
            <person name="Reichelt J."/>
            <person name="Scharfe M."/>
            <person name="Schoen O."/>
            <person name="Bargues M."/>
            <person name="Terol J."/>
            <person name="Climent J."/>
            <person name="Navarro P."/>
            <person name="Collado C."/>
            <person name="Perez-Perez A."/>
            <person name="Ottenwaelder B."/>
            <person name="Duchemin D."/>
            <person name="Cooke R."/>
            <person name="Laudie M."/>
            <person name="Berger-Llauro C."/>
            <person name="Purnelle B."/>
            <person name="Masuy D."/>
            <person name="de Haan M."/>
            <person name="Maarse A.C."/>
            <person name="Alcaraz J.-P."/>
            <person name="Cottet A."/>
            <person name="Casacuberta E."/>
            <person name="Monfort A."/>
            <person name="Argiriou A."/>
            <person name="Flores M."/>
            <person name="Liguori R."/>
            <person name="Vitale D."/>
            <person name="Mannhaupt G."/>
            <person name="Haase D."/>
            <person name="Schoof H."/>
            <person name="Rudd S."/>
            <person name="Zaccaria P."/>
            <person name="Mewes H.-W."/>
            <person name="Mayer K.F.X."/>
            <person name="Kaul S."/>
            <person name="Town C.D."/>
            <person name="Koo H.L."/>
            <person name="Tallon L.J."/>
            <person name="Jenkins J."/>
            <person name="Rooney T."/>
            <person name="Rizzo M."/>
            <person name="Walts A."/>
            <person name="Utterback T."/>
            <person name="Fujii C.Y."/>
            <person name="Shea T.P."/>
            <person name="Creasy T.H."/>
            <person name="Haas B."/>
            <person name="Maiti R."/>
            <person name="Wu D."/>
            <person name="Peterson J."/>
            <person name="Van Aken S."/>
            <person name="Pai G."/>
            <person name="Militscher J."/>
            <person name="Sellers P."/>
            <person name="Gill J.E."/>
            <person name="Feldblyum T.V."/>
            <person name="Preuss D."/>
            <person name="Lin X."/>
            <person name="Nierman W.C."/>
            <person name="Salzberg S.L."/>
            <person name="White O."/>
            <person name="Venter J.C."/>
            <person name="Fraser C.M."/>
            <person name="Kaneko T."/>
            <person name="Nakamura Y."/>
            <person name="Sato S."/>
            <person name="Kato T."/>
            <person name="Asamizu E."/>
            <person name="Sasamoto S."/>
            <person name="Kimura T."/>
            <person name="Idesawa K."/>
            <person name="Kawashima K."/>
            <person name="Kishida Y."/>
            <person name="Kiyokawa C."/>
            <person name="Kohara M."/>
            <person name="Matsumoto M."/>
            <person name="Matsuno A."/>
            <person name="Muraki A."/>
            <person name="Nakayama S."/>
            <person name="Nakazaki N."/>
            <person name="Shinpo S."/>
            <person name="Takeuchi C."/>
            <person name="Wada T."/>
            <person name="Watanabe A."/>
            <person name="Yamada M."/>
            <person name="Yasuda M."/>
            <person name="Tabata S."/>
        </authorList>
    </citation>
    <scope>NUCLEOTIDE SEQUENCE [LARGE SCALE GENOMIC DNA]</scope>
    <source>
        <strain>cv. Columbia</strain>
    </source>
</reference>
<reference key="2">
    <citation type="journal article" date="2017" name="Plant J.">
        <title>Araport11: a complete reannotation of the Arabidopsis thaliana reference genome.</title>
        <authorList>
            <person name="Cheng C.Y."/>
            <person name="Krishnakumar V."/>
            <person name="Chan A.P."/>
            <person name="Thibaud-Nissen F."/>
            <person name="Schobel S."/>
            <person name="Town C.D."/>
        </authorList>
    </citation>
    <scope>GENOME REANNOTATION</scope>
    <source>
        <strain>cv. Columbia</strain>
    </source>
</reference>
<reference key="3">
    <citation type="journal article" date="2003" name="Science">
        <title>Empirical analysis of transcriptional activity in the Arabidopsis genome.</title>
        <authorList>
            <person name="Yamada K."/>
            <person name="Lim J."/>
            <person name="Dale J.M."/>
            <person name="Chen H."/>
            <person name="Shinn P."/>
            <person name="Palm C.J."/>
            <person name="Southwick A.M."/>
            <person name="Wu H.C."/>
            <person name="Kim C.J."/>
            <person name="Nguyen M."/>
            <person name="Pham P.K."/>
            <person name="Cheuk R.F."/>
            <person name="Karlin-Newmann G."/>
            <person name="Liu S.X."/>
            <person name="Lam B."/>
            <person name="Sakano H."/>
            <person name="Wu T."/>
            <person name="Yu G."/>
            <person name="Miranda M."/>
            <person name="Quach H.L."/>
            <person name="Tripp M."/>
            <person name="Chang C.H."/>
            <person name="Lee J.M."/>
            <person name="Toriumi M.J."/>
            <person name="Chan M.M."/>
            <person name="Tang C.C."/>
            <person name="Onodera C.S."/>
            <person name="Deng J.M."/>
            <person name="Akiyama K."/>
            <person name="Ansari Y."/>
            <person name="Arakawa T."/>
            <person name="Banh J."/>
            <person name="Banno F."/>
            <person name="Bowser L."/>
            <person name="Brooks S.Y."/>
            <person name="Carninci P."/>
            <person name="Chao Q."/>
            <person name="Choy N."/>
            <person name="Enju A."/>
            <person name="Goldsmith A.D."/>
            <person name="Gurjal M."/>
            <person name="Hansen N.F."/>
            <person name="Hayashizaki Y."/>
            <person name="Johnson-Hopson C."/>
            <person name="Hsuan V.W."/>
            <person name="Iida K."/>
            <person name="Karnes M."/>
            <person name="Khan S."/>
            <person name="Koesema E."/>
            <person name="Ishida J."/>
            <person name="Jiang P.X."/>
            <person name="Jones T."/>
            <person name="Kawai J."/>
            <person name="Kamiya A."/>
            <person name="Meyers C."/>
            <person name="Nakajima M."/>
            <person name="Narusaka M."/>
            <person name="Seki M."/>
            <person name="Sakurai T."/>
            <person name="Satou M."/>
            <person name="Tamse R."/>
            <person name="Vaysberg M."/>
            <person name="Wallender E.K."/>
            <person name="Wong C."/>
            <person name="Yamamura Y."/>
            <person name="Yuan S."/>
            <person name="Shinozaki K."/>
            <person name="Davis R.W."/>
            <person name="Theologis A."/>
            <person name="Ecker J.R."/>
        </authorList>
    </citation>
    <scope>NUCLEOTIDE SEQUENCE [LARGE SCALE MRNA]</scope>
    <source>
        <strain>cv. Columbia</strain>
    </source>
</reference>
<reference key="4">
    <citation type="journal article" date="2004" name="Plant Mol. Biol.">
        <title>Identification of a novel plant MAR DNA binding protein localized on chromosomal surfaces.</title>
        <authorList>
            <person name="Fujimoto S."/>
            <person name="Matsunaga S."/>
            <person name="Yonemura M."/>
            <person name="Uchiyama S."/>
            <person name="Azuma T."/>
            <person name="Fukui K."/>
        </authorList>
    </citation>
    <scope>IDENTIFICATION</scope>
    <scope>GENE FAMILY</scope>
    <scope>NOMENCLATURE</scope>
    <source>
        <strain>cv. Columbia</strain>
    </source>
</reference>
<reference key="5">
    <citation type="journal article" date="2013" name="Proc. Natl. Acad. Sci. U.S.A.">
        <title>Arabidopsis thaliana AHL family modulates hypocotyl growth redundantly by interacting with each other via the PPC/DUF296 domain.</title>
        <authorList>
            <person name="Zhao J."/>
            <person name="Favero D.S."/>
            <person name="Peng H."/>
            <person name="Neff M.M."/>
        </authorList>
    </citation>
    <scope>GENE FAMILY</scope>
    <scope>DOMAIN PPC</scope>
</reference>
<protein>
    <recommendedName>
        <fullName evidence="10">AT-hook motif nuclear-localized protein 11</fullName>
    </recommendedName>
</protein>
<evidence type="ECO:0000250" key="1">
    <source>
        <dbReference type="UniProtKB" id="Q8VYJ2"/>
    </source>
</evidence>
<evidence type="ECO:0000255" key="2"/>
<evidence type="ECO:0000255" key="3">
    <source>
        <dbReference type="PROSITE-ProRule" id="PRU01078"/>
    </source>
</evidence>
<evidence type="ECO:0000256" key="4">
    <source>
        <dbReference type="SAM" id="MobiDB-lite"/>
    </source>
</evidence>
<evidence type="ECO:0000269" key="5">
    <source>
    </source>
</evidence>
<evidence type="ECO:0000303" key="6">
    <source>
    </source>
</evidence>
<evidence type="ECO:0000305" key="7"/>
<evidence type="ECO:0000312" key="8">
    <source>
        <dbReference type="Araport" id="AT3G61310"/>
    </source>
</evidence>
<evidence type="ECO:0000312" key="9">
    <source>
        <dbReference type="EMBL" id="CAB71061.1"/>
    </source>
</evidence>
<evidence type="ECO:0000312" key="10">
    <source>
        <dbReference type="EMBL" id="FAA00282.1"/>
    </source>
</evidence>
<dbReference type="EMBL" id="AL137898">
    <property type="protein sequence ID" value="CAB71061.1"/>
    <property type="status" value="ALT_INIT"/>
    <property type="molecule type" value="Genomic_DNA"/>
</dbReference>
<dbReference type="EMBL" id="CP002686">
    <property type="protein sequence ID" value="AEE80186.1"/>
    <property type="molecule type" value="Genomic_DNA"/>
</dbReference>
<dbReference type="EMBL" id="AY128386">
    <property type="protein sequence ID" value="AAM91589.1"/>
    <property type="molecule type" value="mRNA"/>
</dbReference>
<dbReference type="EMBL" id="BT008837">
    <property type="protein sequence ID" value="AAP68276.1"/>
    <property type="molecule type" value="mRNA"/>
</dbReference>
<dbReference type="EMBL" id="BR000347">
    <property type="protein sequence ID" value="FAA00282.1"/>
    <property type="molecule type" value="mRNA"/>
</dbReference>
<dbReference type="PIR" id="T47923">
    <property type="entry name" value="T47923"/>
</dbReference>
<dbReference type="RefSeq" id="NP_191690.2">
    <property type="nucleotide sequence ID" value="NM_115995.6"/>
</dbReference>
<dbReference type="SMR" id="Q8L7L5"/>
<dbReference type="FunCoup" id="Q8L7L5">
    <property type="interactions" value="258"/>
</dbReference>
<dbReference type="IntAct" id="Q8L7L5">
    <property type="interactions" value="8"/>
</dbReference>
<dbReference type="STRING" id="3702.Q8L7L5"/>
<dbReference type="GlyGen" id="Q8L7L5">
    <property type="glycosylation" value="2 sites, 1 O-linked glycan (2 sites)"/>
</dbReference>
<dbReference type="iPTMnet" id="Q8L7L5"/>
<dbReference type="PaxDb" id="3702-AT3G61310.1"/>
<dbReference type="ProteomicsDB" id="244889"/>
<dbReference type="EnsemblPlants" id="AT3G61310.1">
    <property type="protein sequence ID" value="AT3G61310.1"/>
    <property type="gene ID" value="AT3G61310"/>
</dbReference>
<dbReference type="GeneID" id="825303"/>
<dbReference type="Gramene" id="AT3G61310.1">
    <property type="protein sequence ID" value="AT3G61310.1"/>
    <property type="gene ID" value="AT3G61310"/>
</dbReference>
<dbReference type="KEGG" id="ath:AT3G61310"/>
<dbReference type="Araport" id="AT3G61310"/>
<dbReference type="TAIR" id="AT3G61310">
    <property type="gene designation" value="AHL11"/>
</dbReference>
<dbReference type="eggNOG" id="ENOG502QTYW">
    <property type="taxonomic scope" value="Eukaryota"/>
</dbReference>
<dbReference type="HOGENOM" id="CLU_039808_0_2_1"/>
<dbReference type="InParanoid" id="Q8L7L5"/>
<dbReference type="OMA" id="SIGEMMP"/>
<dbReference type="OrthoDB" id="688543at2759"/>
<dbReference type="PhylomeDB" id="Q8L7L5"/>
<dbReference type="PRO" id="PR:Q8L7L5"/>
<dbReference type="Proteomes" id="UP000006548">
    <property type="component" value="Chromosome 3"/>
</dbReference>
<dbReference type="ExpressionAtlas" id="Q8L7L5">
    <property type="expression patterns" value="baseline and differential"/>
</dbReference>
<dbReference type="GO" id="GO:0005634">
    <property type="term" value="C:nucleus"/>
    <property type="evidence" value="ECO:0007669"/>
    <property type="project" value="UniProtKB-SubCell"/>
</dbReference>
<dbReference type="GO" id="GO:0003680">
    <property type="term" value="F:minor groove of adenine-thymine-rich DNA binding"/>
    <property type="evidence" value="ECO:0007669"/>
    <property type="project" value="InterPro"/>
</dbReference>
<dbReference type="CDD" id="cd11378">
    <property type="entry name" value="DUF296"/>
    <property type="match status" value="1"/>
</dbReference>
<dbReference type="Gene3D" id="3.30.1330.80">
    <property type="entry name" value="Hypothetical protein, similar to alpha- acetolactate decarboxylase, domain 2"/>
    <property type="match status" value="1"/>
</dbReference>
<dbReference type="InterPro" id="IPR039605">
    <property type="entry name" value="AHL"/>
</dbReference>
<dbReference type="InterPro" id="IPR017956">
    <property type="entry name" value="AT_hook_DNA-bd_motif"/>
</dbReference>
<dbReference type="InterPro" id="IPR005175">
    <property type="entry name" value="PPC_dom"/>
</dbReference>
<dbReference type="PANTHER" id="PTHR31500:SF67">
    <property type="entry name" value="AT-HOOK MOTIF NUCLEAR-LOCALIZED PROTEIN 11"/>
    <property type="match status" value="1"/>
</dbReference>
<dbReference type="PANTHER" id="PTHR31500">
    <property type="entry name" value="AT-HOOK MOTIF NUCLEAR-LOCALIZED PROTEIN 9"/>
    <property type="match status" value="1"/>
</dbReference>
<dbReference type="Pfam" id="PF03479">
    <property type="entry name" value="PCC"/>
    <property type="match status" value="1"/>
</dbReference>
<dbReference type="SMART" id="SM00384">
    <property type="entry name" value="AT_hook"/>
    <property type="match status" value="2"/>
</dbReference>
<dbReference type="SUPFAM" id="SSF117856">
    <property type="entry name" value="AF0104/ALDC/Ptd012-like"/>
    <property type="match status" value="1"/>
</dbReference>
<dbReference type="PROSITE" id="PS51742">
    <property type="entry name" value="PPC"/>
    <property type="match status" value="1"/>
</dbReference>
<gene>
    <name evidence="6" type="primary">AHL11</name>
    <name evidence="8" type="ordered locus">At3g61310</name>
    <name evidence="9" type="ORF">T20K12.210</name>
</gene>
<proteinExistence type="evidence at transcript level"/>
<comment type="function">
    <text evidence="1">Transcription factor that specifically binds AT-rich DNA sequences related to the nuclear matrix attachment regions (MARs).</text>
</comment>
<comment type="subcellular location">
    <subcellularLocation>
        <location evidence="1">Nucleus</location>
    </subcellularLocation>
</comment>
<comment type="domain">
    <text evidence="5">The PPC domain mediates interactions between AHL proteins.</text>
</comment>
<comment type="sequence caution" evidence="7">
    <conflict type="erroneous initiation">
        <sequence resource="EMBL-CDS" id="CAB71061"/>
    </conflict>
    <text>Truncated N-terminus.</text>
</comment>
<keyword id="KW-0238">DNA-binding</keyword>
<keyword id="KW-0539">Nucleus</keyword>
<keyword id="KW-1185">Reference proteome</keyword>
<keyword id="KW-0677">Repeat</keyword>
<keyword id="KW-0804">Transcription</keyword>
<keyword id="KW-0805">Transcription regulation</keyword>